<sequence>MAKRSLAKLNTSDLSGKRVLVRVDFNVPLNDAGAITDDTRIRAALPTINDLIGKGAKVILAAHFGRPKGQVNDKMRLTPVATRLSELLSKPVTKTESCIGPDAEAKVNAMANGDVVLLENVRFFAEEEKNDADFAKQLAGLADVYVNDAFGAAHRAHASTEGVTKFLKPSVAGFLMEKELQYLQGAVDEPKRPLAAIVGGSKVSSKIGVLEALIDKCDKVLIGGGMIFTFYKARGLAVGKSLVEEDKLELAKELEAKAKAKGVELLLPTDVLLADNFAPDANSQVADVTAIPDGWMGLDIGPDAIKVFQAALADCKTVIWNGPMGVFEFDKFAAGTNAIATTLAELSGKGCCTIIGGGDSVAAVEKAGLAEKMSHISTGGGASLELLEGKVLPGVAALDDAA</sequence>
<keyword id="KW-0067">ATP-binding</keyword>
<keyword id="KW-0963">Cytoplasm</keyword>
<keyword id="KW-0324">Glycolysis</keyword>
<keyword id="KW-0418">Kinase</keyword>
<keyword id="KW-0547">Nucleotide-binding</keyword>
<keyword id="KW-1185">Reference proteome</keyword>
<keyword id="KW-0808">Transferase</keyword>
<accession>Q0I6M5</accession>
<name>PGK_SYNS3</name>
<gene>
    <name evidence="1" type="primary">pgk</name>
    <name type="ordered locus">sync_2709</name>
</gene>
<organism>
    <name type="scientific">Synechococcus sp. (strain CC9311)</name>
    <dbReference type="NCBI Taxonomy" id="64471"/>
    <lineage>
        <taxon>Bacteria</taxon>
        <taxon>Bacillati</taxon>
        <taxon>Cyanobacteriota</taxon>
        <taxon>Cyanophyceae</taxon>
        <taxon>Synechococcales</taxon>
        <taxon>Synechococcaceae</taxon>
        <taxon>Synechococcus</taxon>
    </lineage>
</organism>
<dbReference type="EC" id="2.7.2.3" evidence="1"/>
<dbReference type="EMBL" id="CP000435">
    <property type="protein sequence ID" value="ABI46222.1"/>
    <property type="molecule type" value="Genomic_DNA"/>
</dbReference>
<dbReference type="RefSeq" id="WP_011620601.1">
    <property type="nucleotide sequence ID" value="NC_008319.1"/>
</dbReference>
<dbReference type="SMR" id="Q0I6M5"/>
<dbReference type="STRING" id="64471.sync_2709"/>
<dbReference type="KEGG" id="syg:sync_2709"/>
<dbReference type="eggNOG" id="COG0126">
    <property type="taxonomic scope" value="Bacteria"/>
</dbReference>
<dbReference type="HOGENOM" id="CLU_025427_0_2_3"/>
<dbReference type="OrthoDB" id="9808460at2"/>
<dbReference type="UniPathway" id="UPA00109">
    <property type="reaction ID" value="UER00185"/>
</dbReference>
<dbReference type="Proteomes" id="UP000001961">
    <property type="component" value="Chromosome"/>
</dbReference>
<dbReference type="GO" id="GO:0005829">
    <property type="term" value="C:cytosol"/>
    <property type="evidence" value="ECO:0007669"/>
    <property type="project" value="TreeGrafter"/>
</dbReference>
<dbReference type="GO" id="GO:0043531">
    <property type="term" value="F:ADP binding"/>
    <property type="evidence" value="ECO:0007669"/>
    <property type="project" value="TreeGrafter"/>
</dbReference>
<dbReference type="GO" id="GO:0005524">
    <property type="term" value="F:ATP binding"/>
    <property type="evidence" value="ECO:0007669"/>
    <property type="project" value="UniProtKB-KW"/>
</dbReference>
<dbReference type="GO" id="GO:0004618">
    <property type="term" value="F:phosphoglycerate kinase activity"/>
    <property type="evidence" value="ECO:0007669"/>
    <property type="project" value="UniProtKB-UniRule"/>
</dbReference>
<dbReference type="GO" id="GO:0006094">
    <property type="term" value="P:gluconeogenesis"/>
    <property type="evidence" value="ECO:0007669"/>
    <property type="project" value="TreeGrafter"/>
</dbReference>
<dbReference type="GO" id="GO:0006096">
    <property type="term" value="P:glycolytic process"/>
    <property type="evidence" value="ECO:0007669"/>
    <property type="project" value="UniProtKB-UniRule"/>
</dbReference>
<dbReference type="CDD" id="cd00318">
    <property type="entry name" value="Phosphoglycerate_kinase"/>
    <property type="match status" value="1"/>
</dbReference>
<dbReference type="FunFam" id="3.40.50.1260:FF:000003">
    <property type="entry name" value="Phosphoglycerate kinase"/>
    <property type="match status" value="1"/>
</dbReference>
<dbReference type="FunFam" id="3.40.50.1260:FF:000006">
    <property type="entry name" value="Phosphoglycerate kinase"/>
    <property type="match status" value="1"/>
</dbReference>
<dbReference type="FunFam" id="3.40.50.1260:FF:000017">
    <property type="entry name" value="Phosphoglycerate kinase"/>
    <property type="match status" value="1"/>
</dbReference>
<dbReference type="Gene3D" id="3.40.50.1260">
    <property type="entry name" value="Phosphoglycerate kinase, N-terminal domain"/>
    <property type="match status" value="2"/>
</dbReference>
<dbReference type="HAMAP" id="MF_00145">
    <property type="entry name" value="Phosphoglyc_kinase"/>
    <property type="match status" value="1"/>
</dbReference>
<dbReference type="InterPro" id="IPR001576">
    <property type="entry name" value="Phosphoglycerate_kinase"/>
</dbReference>
<dbReference type="InterPro" id="IPR015911">
    <property type="entry name" value="Phosphoglycerate_kinase_CS"/>
</dbReference>
<dbReference type="InterPro" id="IPR015824">
    <property type="entry name" value="Phosphoglycerate_kinase_N"/>
</dbReference>
<dbReference type="InterPro" id="IPR036043">
    <property type="entry name" value="Phosphoglycerate_kinase_sf"/>
</dbReference>
<dbReference type="PANTHER" id="PTHR11406">
    <property type="entry name" value="PHOSPHOGLYCERATE KINASE"/>
    <property type="match status" value="1"/>
</dbReference>
<dbReference type="PANTHER" id="PTHR11406:SF23">
    <property type="entry name" value="PHOSPHOGLYCERATE KINASE 1, CHLOROPLASTIC-RELATED"/>
    <property type="match status" value="1"/>
</dbReference>
<dbReference type="Pfam" id="PF00162">
    <property type="entry name" value="PGK"/>
    <property type="match status" value="1"/>
</dbReference>
<dbReference type="PIRSF" id="PIRSF000724">
    <property type="entry name" value="Pgk"/>
    <property type="match status" value="1"/>
</dbReference>
<dbReference type="PRINTS" id="PR00477">
    <property type="entry name" value="PHGLYCKINASE"/>
</dbReference>
<dbReference type="SUPFAM" id="SSF53748">
    <property type="entry name" value="Phosphoglycerate kinase"/>
    <property type="match status" value="1"/>
</dbReference>
<dbReference type="PROSITE" id="PS00111">
    <property type="entry name" value="PGLYCERATE_KINASE"/>
    <property type="match status" value="1"/>
</dbReference>
<proteinExistence type="inferred from homology"/>
<reference key="1">
    <citation type="journal article" date="2006" name="Proc. Natl. Acad. Sci. U.S.A.">
        <title>Genome sequence of Synechococcus CC9311: insights into adaptation to a coastal environment.</title>
        <authorList>
            <person name="Palenik B."/>
            <person name="Ren Q."/>
            <person name="Dupont C.L."/>
            <person name="Myers G.S."/>
            <person name="Heidelberg J.F."/>
            <person name="Badger J.H."/>
            <person name="Madupu R."/>
            <person name="Nelson W.C."/>
            <person name="Brinkac L.M."/>
            <person name="Dodson R.J."/>
            <person name="Durkin A.S."/>
            <person name="Daugherty S.C."/>
            <person name="Sullivan S.A."/>
            <person name="Khouri H."/>
            <person name="Mohamoud Y."/>
            <person name="Halpin R."/>
            <person name="Paulsen I.T."/>
        </authorList>
    </citation>
    <scope>NUCLEOTIDE SEQUENCE [LARGE SCALE GENOMIC DNA]</scope>
    <source>
        <strain>CC9311</strain>
    </source>
</reference>
<comment type="catalytic activity">
    <reaction evidence="1">
        <text>(2R)-3-phosphoglycerate + ATP = (2R)-3-phospho-glyceroyl phosphate + ADP</text>
        <dbReference type="Rhea" id="RHEA:14801"/>
        <dbReference type="ChEBI" id="CHEBI:30616"/>
        <dbReference type="ChEBI" id="CHEBI:57604"/>
        <dbReference type="ChEBI" id="CHEBI:58272"/>
        <dbReference type="ChEBI" id="CHEBI:456216"/>
        <dbReference type="EC" id="2.7.2.3"/>
    </reaction>
</comment>
<comment type="pathway">
    <text evidence="1">Carbohydrate degradation; glycolysis; pyruvate from D-glyceraldehyde 3-phosphate: step 2/5.</text>
</comment>
<comment type="subunit">
    <text evidence="1">Monomer.</text>
</comment>
<comment type="subcellular location">
    <subcellularLocation>
        <location evidence="1">Cytoplasm</location>
    </subcellularLocation>
</comment>
<comment type="similarity">
    <text evidence="1">Belongs to the phosphoglycerate kinase family.</text>
</comment>
<feature type="chain" id="PRO_1000058081" description="Phosphoglycerate kinase">
    <location>
        <begin position="1"/>
        <end position="402"/>
    </location>
</feature>
<feature type="binding site" evidence="1">
    <location>
        <begin position="24"/>
        <end position="26"/>
    </location>
    <ligand>
        <name>substrate</name>
    </ligand>
</feature>
<feature type="binding site" evidence="1">
    <location>
        <position position="40"/>
    </location>
    <ligand>
        <name>substrate</name>
    </ligand>
</feature>
<feature type="binding site" evidence="1">
    <location>
        <begin position="63"/>
        <end position="66"/>
    </location>
    <ligand>
        <name>substrate</name>
    </ligand>
</feature>
<feature type="binding site" evidence="1">
    <location>
        <position position="122"/>
    </location>
    <ligand>
        <name>substrate</name>
    </ligand>
</feature>
<feature type="binding site" evidence="1">
    <location>
        <position position="155"/>
    </location>
    <ligand>
        <name>substrate</name>
    </ligand>
</feature>
<feature type="binding site" evidence="1">
    <location>
        <position position="206"/>
    </location>
    <ligand>
        <name>ATP</name>
        <dbReference type="ChEBI" id="CHEBI:30616"/>
    </ligand>
</feature>
<feature type="binding site" evidence="1">
    <location>
        <position position="297"/>
    </location>
    <ligand>
        <name>ATP</name>
        <dbReference type="ChEBI" id="CHEBI:30616"/>
    </ligand>
</feature>
<feature type="binding site" evidence="1">
    <location>
        <position position="328"/>
    </location>
    <ligand>
        <name>ATP</name>
        <dbReference type="ChEBI" id="CHEBI:30616"/>
    </ligand>
</feature>
<feature type="binding site" evidence="1">
    <location>
        <begin position="357"/>
        <end position="360"/>
    </location>
    <ligand>
        <name>ATP</name>
        <dbReference type="ChEBI" id="CHEBI:30616"/>
    </ligand>
</feature>
<evidence type="ECO:0000255" key="1">
    <source>
        <dbReference type="HAMAP-Rule" id="MF_00145"/>
    </source>
</evidence>
<protein>
    <recommendedName>
        <fullName evidence="1">Phosphoglycerate kinase</fullName>
        <ecNumber evidence="1">2.7.2.3</ecNumber>
    </recommendedName>
</protein>